<gene>
    <name evidence="1" type="primary">eIF3f2</name>
    <name evidence="1" type="synonym">eIF3-S5-2</name>
    <name type="ORF">GF11048</name>
</gene>
<keyword id="KW-0963">Cytoplasm</keyword>
<keyword id="KW-0396">Initiation factor</keyword>
<keyword id="KW-0648">Protein biosynthesis</keyword>
<keyword id="KW-1185">Reference proteome</keyword>
<proteinExistence type="inferred from homology"/>
<organism>
    <name type="scientific">Drosophila ananassae</name>
    <name type="common">Fruit fly</name>
    <dbReference type="NCBI Taxonomy" id="7217"/>
    <lineage>
        <taxon>Eukaryota</taxon>
        <taxon>Metazoa</taxon>
        <taxon>Ecdysozoa</taxon>
        <taxon>Arthropoda</taxon>
        <taxon>Hexapoda</taxon>
        <taxon>Insecta</taxon>
        <taxon>Pterygota</taxon>
        <taxon>Neoptera</taxon>
        <taxon>Endopterygota</taxon>
        <taxon>Diptera</taxon>
        <taxon>Brachycera</taxon>
        <taxon>Muscomorpha</taxon>
        <taxon>Ephydroidea</taxon>
        <taxon>Drosophilidae</taxon>
        <taxon>Drosophila</taxon>
        <taxon>Sophophora</taxon>
    </lineage>
</organism>
<accession>B3MJ61</accession>
<dbReference type="EMBL" id="CH902619">
    <property type="protein sequence ID" value="EDV38155.1"/>
    <property type="molecule type" value="Genomic_DNA"/>
</dbReference>
<dbReference type="SMR" id="B3MJ61"/>
<dbReference type="FunCoup" id="B3MJ61">
    <property type="interactions" value="393"/>
</dbReference>
<dbReference type="STRING" id="7217.B3MJ61"/>
<dbReference type="EnsemblMetazoa" id="FBtr0115748">
    <property type="protein sequence ID" value="FBpp0114240"/>
    <property type="gene ID" value="FBgn0088088"/>
</dbReference>
<dbReference type="EnsemblMetazoa" id="XM_001961297.4">
    <property type="protein sequence ID" value="XP_001961333.1"/>
    <property type="gene ID" value="LOC6493914"/>
</dbReference>
<dbReference type="GeneID" id="6493914"/>
<dbReference type="KEGG" id="dan:6493914"/>
<dbReference type="CTD" id="35547"/>
<dbReference type="eggNOG" id="KOG2975">
    <property type="taxonomic scope" value="Eukaryota"/>
</dbReference>
<dbReference type="HOGENOM" id="CLU_027018_0_1_1"/>
<dbReference type="InParanoid" id="B3MJ61"/>
<dbReference type="OMA" id="IEITNCF"/>
<dbReference type="OrthoDB" id="25498at2759"/>
<dbReference type="PhylomeDB" id="B3MJ61"/>
<dbReference type="Proteomes" id="UP000007801">
    <property type="component" value="Unassembled WGS sequence"/>
</dbReference>
<dbReference type="GO" id="GO:0016282">
    <property type="term" value="C:eukaryotic 43S preinitiation complex"/>
    <property type="evidence" value="ECO:0007669"/>
    <property type="project" value="UniProtKB-UniRule"/>
</dbReference>
<dbReference type="GO" id="GO:0033290">
    <property type="term" value="C:eukaryotic 48S preinitiation complex"/>
    <property type="evidence" value="ECO:0007669"/>
    <property type="project" value="UniProtKB-UniRule"/>
</dbReference>
<dbReference type="GO" id="GO:0071541">
    <property type="term" value="C:eukaryotic translation initiation factor 3 complex, eIF3m"/>
    <property type="evidence" value="ECO:0007669"/>
    <property type="project" value="TreeGrafter"/>
</dbReference>
<dbReference type="GO" id="GO:0008237">
    <property type="term" value="F:metallopeptidase activity"/>
    <property type="evidence" value="ECO:0007669"/>
    <property type="project" value="InterPro"/>
</dbReference>
<dbReference type="GO" id="GO:0003743">
    <property type="term" value="F:translation initiation factor activity"/>
    <property type="evidence" value="ECO:0007669"/>
    <property type="project" value="UniProtKB-UniRule"/>
</dbReference>
<dbReference type="GO" id="GO:0031369">
    <property type="term" value="F:translation initiation factor binding"/>
    <property type="evidence" value="ECO:0007669"/>
    <property type="project" value="InterPro"/>
</dbReference>
<dbReference type="GO" id="GO:0001732">
    <property type="term" value="P:formation of cytoplasmic translation initiation complex"/>
    <property type="evidence" value="ECO:0007669"/>
    <property type="project" value="UniProtKB-UniRule"/>
</dbReference>
<dbReference type="CDD" id="cd08064">
    <property type="entry name" value="MPN_eIF3f"/>
    <property type="match status" value="1"/>
</dbReference>
<dbReference type="Gene3D" id="3.40.140.10">
    <property type="entry name" value="Cytidine Deaminase, domain 2"/>
    <property type="match status" value="1"/>
</dbReference>
<dbReference type="HAMAP" id="MF_03005">
    <property type="entry name" value="eIF3f"/>
    <property type="match status" value="1"/>
</dbReference>
<dbReference type="InterPro" id="IPR027531">
    <property type="entry name" value="eIF3f"/>
</dbReference>
<dbReference type="InterPro" id="IPR024969">
    <property type="entry name" value="EIF3F/CSN6-like_C"/>
</dbReference>
<dbReference type="InterPro" id="IPR000555">
    <property type="entry name" value="JAMM/MPN+_dom"/>
</dbReference>
<dbReference type="InterPro" id="IPR037518">
    <property type="entry name" value="MPN"/>
</dbReference>
<dbReference type="PANTHER" id="PTHR10540:SF6">
    <property type="entry name" value="EUKARYOTIC TRANSLATION INITIATION FACTOR 3 SUBUNIT F"/>
    <property type="match status" value="1"/>
</dbReference>
<dbReference type="PANTHER" id="PTHR10540">
    <property type="entry name" value="EUKARYOTIC TRANSLATION INITIATION FACTOR 3 SUBUNIT F-RELATED"/>
    <property type="match status" value="1"/>
</dbReference>
<dbReference type="Pfam" id="PF01398">
    <property type="entry name" value="JAB"/>
    <property type="match status" value="1"/>
</dbReference>
<dbReference type="Pfam" id="PF13012">
    <property type="entry name" value="MitMem_reg"/>
    <property type="match status" value="1"/>
</dbReference>
<dbReference type="SMART" id="SM00232">
    <property type="entry name" value="JAB_MPN"/>
    <property type="match status" value="1"/>
</dbReference>
<dbReference type="PROSITE" id="PS50249">
    <property type="entry name" value="MPN"/>
    <property type="match status" value="1"/>
</dbReference>
<comment type="function">
    <text evidence="1">Component of the eukaryotic translation initiation factor 3 (eIF-3) complex, which is involved in protein synthesis of a specialized repertoire of mRNAs and, together with other initiation factors, stimulates binding of mRNA and methionyl-tRNAi to the 40S ribosome. The eIF-3 complex specifically targets and initiates translation of a subset of mRNAs involved in cell proliferation.</text>
</comment>
<comment type="subunit">
    <text evidence="1">Component of the eukaryotic translation initiation factor 3 (eIF-3) complex. The eIF-3 complex interacts with pix.</text>
</comment>
<comment type="subcellular location">
    <subcellularLocation>
        <location evidence="1">Cytoplasm</location>
    </subcellularLocation>
</comment>
<comment type="similarity">
    <text evidence="1">Belongs to the eIF-3 subunit F family.</text>
</comment>
<name>EI3F2_DROAN</name>
<sequence>MLCNFNLQAKVVLQPLVLFQIIDSYERRPKDATQIIGTLLGRSNGKEITITNCFTVLHKEHPDSARIDLDLGYANDMLELNQLTYPQEKVLGWFSTGKSVSRSALLLHDYYSRECSDGQPLHLLVDATLKGQRLSTRLYCGVEMGVPGGTKGLMFSLVPLEMASDSAEMVALRLMQKQNLQPGAKQVGRILPELVQVVEATRELQLRLDLVLRYINDVLARKRRPDNVVGRALHDTLTSVPLVDTDNFKLMFNANVRDMLMAITLSTMIKTQLQISEKLFAMPDH</sequence>
<feature type="chain" id="PRO_0000364298" description="Eukaryotic translation initiation factor 3 subunit F-2">
    <location>
        <begin position="1"/>
        <end position="285"/>
    </location>
</feature>
<feature type="domain" description="MPN" evidence="2">
    <location>
        <begin position="11"/>
        <end position="145"/>
    </location>
</feature>
<reference key="1">
    <citation type="journal article" date="2007" name="Nature">
        <title>Evolution of genes and genomes on the Drosophila phylogeny.</title>
        <authorList>
            <consortium name="Drosophila 12 genomes consortium"/>
        </authorList>
    </citation>
    <scope>NUCLEOTIDE SEQUENCE [LARGE SCALE GENOMIC DNA]</scope>
    <source>
        <strain>Tucson 14024-0371.13</strain>
    </source>
</reference>
<protein>
    <recommendedName>
        <fullName evidence="1">Eukaryotic translation initiation factor 3 subunit F-2</fullName>
        <shortName evidence="1">eIF3f-2</shortName>
    </recommendedName>
    <alternativeName>
        <fullName evidence="1">Eukaryotic translation initiation factor 3 subunit 5-2</fullName>
    </alternativeName>
</protein>
<evidence type="ECO:0000255" key="1">
    <source>
        <dbReference type="HAMAP-Rule" id="MF_03005"/>
    </source>
</evidence>
<evidence type="ECO:0000255" key="2">
    <source>
        <dbReference type="PROSITE-ProRule" id="PRU01182"/>
    </source>
</evidence>